<sequence length="180" mass="18605">MRILGIDPGLRVTGFGVIDVSGHRLAYVTSGVIRTPTADLATRLGTIFQGVSTIVREHAPDQAAIEKVFVNVNPQSTLLLGQARGAAICGLVAGGLPVAEYTALQLKQAVVGYGRATKTQMQEMVTRLLNLSGQPGSDAADALGMAICHAHGGNTLSTLGGLAPALAQKGLRVRRGRLVG</sequence>
<keyword id="KW-0963">Cytoplasm</keyword>
<keyword id="KW-0227">DNA damage</keyword>
<keyword id="KW-0233">DNA recombination</keyword>
<keyword id="KW-0234">DNA repair</keyword>
<keyword id="KW-0238">DNA-binding</keyword>
<keyword id="KW-0255">Endonuclease</keyword>
<keyword id="KW-0378">Hydrolase</keyword>
<keyword id="KW-0460">Magnesium</keyword>
<keyword id="KW-0479">Metal-binding</keyword>
<keyword id="KW-0540">Nuclease</keyword>
<comment type="function">
    <text evidence="1">The RuvA-RuvB-RuvC complex processes Holliday junction (HJ) DNA during genetic recombination and DNA repair. Endonuclease that resolves HJ intermediates. Cleaves cruciform DNA by making single-stranded nicks across the HJ at symmetrical positions within the homologous arms, yielding a 5'-phosphate and a 3'-hydroxyl group; requires a central core of homology in the junction. The consensus cleavage sequence is 5'-(A/T)TT(C/G)-3'. Cleavage occurs on the 3'-side of the TT dinucleotide at the point of strand exchange. HJ branch migration catalyzed by RuvA-RuvB allows RuvC to scan DNA until it finds its consensus sequence, where it cleaves and resolves the cruciform DNA.</text>
</comment>
<comment type="catalytic activity">
    <reaction evidence="1">
        <text>Endonucleolytic cleavage at a junction such as a reciprocal single-stranded crossover between two homologous DNA duplexes (Holliday junction).</text>
        <dbReference type="EC" id="3.1.21.10"/>
    </reaction>
</comment>
<comment type="cofactor">
    <cofactor evidence="1">
        <name>Mg(2+)</name>
        <dbReference type="ChEBI" id="CHEBI:18420"/>
    </cofactor>
    <text evidence="1">Binds 2 Mg(2+) ion per subunit.</text>
</comment>
<comment type="subunit">
    <text evidence="1">Homodimer which binds Holliday junction (HJ) DNA. The HJ becomes 2-fold symmetrical on binding to RuvC with unstacked arms; it has a different conformation from HJ DNA in complex with RuvA. In the full resolvosome a probable DNA-RuvA(4)-RuvB(12)-RuvC(2) complex forms which resolves the HJ.</text>
</comment>
<comment type="subcellular location">
    <subcellularLocation>
        <location evidence="1">Cytoplasm</location>
    </subcellularLocation>
</comment>
<comment type="similarity">
    <text evidence="1">Belongs to the RuvC family.</text>
</comment>
<dbReference type="EC" id="3.1.21.10" evidence="1"/>
<dbReference type="EMBL" id="CP000378">
    <property type="protein sequence ID" value="ABF75121.1"/>
    <property type="molecule type" value="Genomic_DNA"/>
</dbReference>
<dbReference type="SMR" id="Q1BZ34"/>
<dbReference type="HOGENOM" id="CLU_091257_2_0_4"/>
<dbReference type="GO" id="GO:0005737">
    <property type="term" value="C:cytoplasm"/>
    <property type="evidence" value="ECO:0007669"/>
    <property type="project" value="UniProtKB-SubCell"/>
</dbReference>
<dbReference type="GO" id="GO:0048476">
    <property type="term" value="C:Holliday junction resolvase complex"/>
    <property type="evidence" value="ECO:0007669"/>
    <property type="project" value="UniProtKB-UniRule"/>
</dbReference>
<dbReference type="GO" id="GO:0008821">
    <property type="term" value="F:crossover junction DNA endonuclease activity"/>
    <property type="evidence" value="ECO:0007669"/>
    <property type="project" value="UniProtKB-UniRule"/>
</dbReference>
<dbReference type="GO" id="GO:0003677">
    <property type="term" value="F:DNA binding"/>
    <property type="evidence" value="ECO:0007669"/>
    <property type="project" value="UniProtKB-KW"/>
</dbReference>
<dbReference type="GO" id="GO:0000287">
    <property type="term" value="F:magnesium ion binding"/>
    <property type="evidence" value="ECO:0007669"/>
    <property type="project" value="UniProtKB-UniRule"/>
</dbReference>
<dbReference type="GO" id="GO:0006310">
    <property type="term" value="P:DNA recombination"/>
    <property type="evidence" value="ECO:0007669"/>
    <property type="project" value="UniProtKB-UniRule"/>
</dbReference>
<dbReference type="GO" id="GO:0006281">
    <property type="term" value="P:DNA repair"/>
    <property type="evidence" value="ECO:0007669"/>
    <property type="project" value="UniProtKB-UniRule"/>
</dbReference>
<dbReference type="CDD" id="cd16962">
    <property type="entry name" value="RuvC"/>
    <property type="match status" value="1"/>
</dbReference>
<dbReference type="FunFam" id="3.30.420.10:FF:000002">
    <property type="entry name" value="Crossover junction endodeoxyribonuclease RuvC"/>
    <property type="match status" value="1"/>
</dbReference>
<dbReference type="Gene3D" id="3.30.420.10">
    <property type="entry name" value="Ribonuclease H-like superfamily/Ribonuclease H"/>
    <property type="match status" value="1"/>
</dbReference>
<dbReference type="HAMAP" id="MF_00034">
    <property type="entry name" value="RuvC"/>
    <property type="match status" value="1"/>
</dbReference>
<dbReference type="InterPro" id="IPR012337">
    <property type="entry name" value="RNaseH-like_sf"/>
</dbReference>
<dbReference type="InterPro" id="IPR036397">
    <property type="entry name" value="RNaseH_sf"/>
</dbReference>
<dbReference type="InterPro" id="IPR020563">
    <property type="entry name" value="X-over_junc_endoDNase_Mg_BS"/>
</dbReference>
<dbReference type="InterPro" id="IPR002176">
    <property type="entry name" value="X-over_junc_endoDNase_RuvC"/>
</dbReference>
<dbReference type="NCBIfam" id="TIGR00228">
    <property type="entry name" value="ruvC"/>
    <property type="match status" value="1"/>
</dbReference>
<dbReference type="PANTHER" id="PTHR30194">
    <property type="entry name" value="CROSSOVER JUNCTION ENDODEOXYRIBONUCLEASE RUVC"/>
    <property type="match status" value="1"/>
</dbReference>
<dbReference type="PANTHER" id="PTHR30194:SF3">
    <property type="entry name" value="CROSSOVER JUNCTION ENDODEOXYRIBONUCLEASE RUVC"/>
    <property type="match status" value="1"/>
</dbReference>
<dbReference type="Pfam" id="PF02075">
    <property type="entry name" value="RuvC"/>
    <property type="match status" value="1"/>
</dbReference>
<dbReference type="PRINTS" id="PR00696">
    <property type="entry name" value="RSOLVASERUVC"/>
</dbReference>
<dbReference type="SUPFAM" id="SSF53098">
    <property type="entry name" value="Ribonuclease H-like"/>
    <property type="match status" value="1"/>
</dbReference>
<dbReference type="PROSITE" id="PS01321">
    <property type="entry name" value="RUVC"/>
    <property type="match status" value="1"/>
</dbReference>
<feature type="chain" id="PRO_1000002727" description="Crossover junction endodeoxyribonuclease RuvC">
    <location>
        <begin position="1"/>
        <end position="180"/>
    </location>
</feature>
<feature type="active site" evidence="1">
    <location>
        <position position="7"/>
    </location>
</feature>
<feature type="active site" evidence="1">
    <location>
        <position position="66"/>
    </location>
</feature>
<feature type="active site" evidence="1">
    <location>
        <position position="138"/>
    </location>
</feature>
<feature type="binding site" evidence="1">
    <location>
        <position position="7"/>
    </location>
    <ligand>
        <name>Mg(2+)</name>
        <dbReference type="ChEBI" id="CHEBI:18420"/>
        <label>1</label>
    </ligand>
</feature>
<feature type="binding site" evidence="1">
    <location>
        <position position="66"/>
    </location>
    <ligand>
        <name>Mg(2+)</name>
        <dbReference type="ChEBI" id="CHEBI:18420"/>
        <label>2</label>
    </ligand>
</feature>
<feature type="binding site" evidence="1">
    <location>
        <position position="138"/>
    </location>
    <ligand>
        <name>Mg(2+)</name>
        <dbReference type="ChEBI" id="CHEBI:18420"/>
        <label>1</label>
    </ligand>
</feature>
<reference key="1">
    <citation type="submission" date="2006-05" db="EMBL/GenBank/DDBJ databases">
        <title>Complete sequence of chromosome 1 of Burkholderia cenocepacia AU 1054.</title>
        <authorList>
            <consortium name="US DOE Joint Genome Institute"/>
            <person name="Copeland A."/>
            <person name="Lucas S."/>
            <person name="Lapidus A."/>
            <person name="Barry K."/>
            <person name="Detter J.C."/>
            <person name="Glavina del Rio T."/>
            <person name="Hammon N."/>
            <person name="Israni S."/>
            <person name="Dalin E."/>
            <person name="Tice H."/>
            <person name="Pitluck S."/>
            <person name="Chain P."/>
            <person name="Malfatti S."/>
            <person name="Shin M."/>
            <person name="Vergez L."/>
            <person name="Schmutz J."/>
            <person name="Larimer F."/>
            <person name="Land M."/>
            <person name="Hauser L."/>
            <person name="Kyrpides N."/>
            <person name="Lykidis A."/>
            <person name="LiPuma J.J."/>
            <person name="Konstantinidis K."/>
            <person name="Tiedje J.M."/>
            <person name="Richardson P."/>
        </authorList>
    </citation>
    <scope>NUCLEOTIDE SEQUENCE [LARGE SCALE GENOMIC DNA]</scope>
    <source>
        <strain>AU 1054</strain>
    </source>
</reference>
<gene>
    <name evidence="1" type="primary">ruvC</name>
    <name type="ordered locus">Bcen_0207</name>
</gene>
<organism>
    <name type="scientific">Burkholderia orbicola (strain AU 1054)</name>
    <dbReference type="NCBI Taxonomy" id="331271"/>
    <lineage>
        <taxon>Bacteria</taxon>
        <taxon>Pseudomonadati</taxon>
        <taxon>Pseudomonadota</taxon>
        <taxon>Betaproteobacteria</taxon>
        <taxon>Burkholderiales</taxon>
        <taxon>Burkholderiaceae</taxon>
        <taxon>Burkholderia</taxon>
        <taxon>Burkholderia cepacia complex</taxon>
        <taxon>Burkholderia orbicola</taxon>
    </lineage>
</organism>
<name>RUVC_BURO1</name>
<evidence type="ECO:0000255" key="1">
    <source>
        <dbReference type="HAMAP-Rule" id="MF_00034"/>
    </source>
</evidence>
<accession>Q1BZ34</accession>
<protein>
    <recommendedName>
        <fullName evidence="1">Crossover junction endodeoxyribonuclease RuvC</fullName>
        <ecNumber evidence="1">3.1.21.10</ecNumber>
    </recommendedName>
    <alternativeName>
        <fullName evidence="1">Holliday junction nuclease RuvC</fullName>
    </alternativeName>
    <alternativeName>
        <fullName evidence="1">Holliday junction resolvase RuvC</fullName>
    </alternativeName>
</protein>
<proteinExistence type="inferred from homology"/>